<dbReference type="EC" id="1.12.99.-"/>
<dbReference type="EMBL" id="L77117">
    <property type="protein sequence ID" value="AAB99193.1"/>
    <property type="molecule type" value="Genomic_DNA"/>
</dbReference>
<dbReference type="PIR" id="F64448">
    <property type="entry name" value="F64448"/>
</dbReference>
<dbReference type="RefSeq" id="WP_010870704.1">
    <property type="nucleotide sequence ID" value="NC_000909.1"/>
</dbReference>
<dbReference type="SMR" id="Q58591"/>
<dbReference type="FunCoup" id="Q58591">
    <property type="interactions" value="94"/>
</dbReference>
<dbReference type="STRING" id="243232.MJ_1191"/>
<dbReference type="PaxDb" id="243232-MJ_1191"/>
<dbReference type="EnsemblBacteria" id="AAB99193">
    <property type="protein sequence ID" value="AAB99193"/>
    <property type="gene ID" value="MJ_1191"/>
</dbReference>
<dbReference type="GeneID" id="1452088"/>
<dbReference type="KEGG" id="mja:MJ_1191"/>
<dbReference type="eggNOG" id="arCOG02472">
    <property type="taxonomic scope" value="Archaea"/>
</dbReference>
<dbReference type="HOGENOM" id="CLU_053270_0_0_2"/>
<dbReference type="InParanoid" id="Q58591"/>
<dbReference type="PhylomeDB" id="Q58591"/>
<dbReference type="Proteomes" id="UP000000805">
    <property type="component" value="Chromosome"/>
</dbReference>
<dbReference type="GO" id="GO:0051536">
    <property type="term" value="F:iron-sulfur cluster binding"/>
    <property type="evidence" value="ECO:0007669"/>
    <property type="project" value="InterPro"/>
</dbReference>
<dbReference type="GO" id="GO:0016491">
    <property type="term" value="F:oxidoreductase activity"/>
    <property type="evidence" value="ECO:0007669"/>
    <property type="project" value="UniProtKB-KW"/>
</dbReference>
<dbReference type="Gene3D" id="3.40.50.700">
    <property type="entry name" value="NADH:ubiquinone oxidoreductase-like, 20kDa subunit"/>
    <property type="match status" value="1"/>
</dbReference>
<dbReference type="InterPro" id="IPR051349">
    <property type="entry name" value="Hydrogenase_assoc-protein"/>
</dbReference>
<dbReference type="InterPro" id="IPR006137">
    <property type="entry name" value="NADH_UbQ_OxRdtase-like_20kDa"/>
</dbReference>
<dbReference type="InterPro" id="IPR037024">
    <property type="entry name" value="NiFe_Hase_small_N_sf"/>
</dbReference>
<dbReference type="NCBIfam" id="NF045875">
    <property type="entry name" value="F420_non_VhuG"/>
    <property type="match status" value="1"/>
</dbReference>
<dbReference type="PANTHER" id="PTHR42845">
    <property type="entry name" value="COENZYME F420-REDUCING HYDROGENASE, GAMMA SUBUNIT"/>
    <property type="match status" value="1"/>
</dbReference>
<dbReference type="PANTHER" id="PTHR42845:SF2">
    <property type="entry name" value="F420-NON-REDUCING HYDROGENASE VHU SUBUNIT G"/>
    <property type="match status" value="1"/>
</dbReference>
<dbReference type="Pfam" id="PF01058">
    <property type="entry name" value="Oxidored_q6"/>
    <property type="match status" value="1"/>
</dbReference>
<dbReference type="SUPFAM" id="SSF56770">
    <property type="entry name" value="HydA/Nqo6-like"/>
    <property type="match status" value="1"/>
</dbReference>
<feature type="chain" id="PRO_0000204361" description="F420-non-reducing hydrogenase vhu subunit G">
    <location>
        <begin position="1"/>
        <end position="288"/>
    </location>
</feature>
<name>VHUG_METJA</name>
<organism>
    <name type="scientific">Methanocaldococcus jannaschii (strain ATCC 43067 / DSM 2661 / JAL-1 / JCM 10045 / NBRC 100440)</name>
    <name type="common">Methanococcus jannaschii</name>
    <dbReference type="NCBI Taxonomy" id="243232"/>
    <lineage>
        <taxon>Archaea</taxon>
        <taxon>Methanobacteriati</taxon>
        <taxon>Methanobacteriota</taxon>
        <taxon>Methanomada group</taxon>
        <taxon>Methanococci</taxon>
        <taxon>Methanococcales</taxon>
        <taxon>Methanocaldococcaceae</taxon>
        <taxon>Methanocaldococcus</taxon>
    </lineage>
</organism>
<evidence type="ECO:0000250" key="1"/>
<evidence type="ECO:0000305" key="2"/>
<comment type="subunit">
    <text evidence="1">The F420-non-reducing hydrogenase vhu is composed of four subunits; VhuA, VhuD, VhuG and VhuU.</text>
</comment>
<comment type="similarity">
    <text evidence="2">Belongs to the [NiFe]/[NiFeSe] hydrogenase small subunit family.</text>
</comment>
<gene>
    <name type="primary">vhuG</name>
    <name type="ordered locus">MJ1191</name>
</gene>
<sequence>MITLAVKVGMIQLCGCSGCHISLLDLHDKLLEVLPNLEIVYAPIIADPKEIPEGIDVFLVEGGIRNEHDEHLIHEIREKSKIVIAWGTCAAYGGIPGLGNLYKKEELLNYVYSTDSTENKGEIPSEEIPPLEEYVKPIKDFIKVDYTIPGCPPTPKMIADAIIALLNGEEPKLPTKIVCDECPRKKENVFPETFKRTHEGRPDPERCLFEQGYTCLGFATRAGCGAKCPSAGVPCRGCFGKTDKSLDLGANAANVLANAGEAALEIPDKVALLNRFTLPDALINRKAK</sequence>
<accession>Q58591</accession>
<protein>
    <recommendedName>
        <fullName>F420-non-reducing hydrogenase vhu subunit G</fullName>
        <ecNumber>1.12.99.-</ecNumber>
    </recommendedName>
</protein>
<reference key="1">
    <citation type="journal article" date="1996" name="Science">
        <title>Complete genome sequence of the methanogenic archaeon, Methanococcus jannaschii.</title>
        <authorList>
            <person name="Bult C.J."/>
            <person name="White O."/>
            <person name="Olsen G.J."/>
            <person name="Zhou L."/>
            <person name="Fleischmann R.D."/>
            <person name="Sutton G.G."/>
            <person name="Blake J.A."/>
            <person name="FitzGerald L.M."/>
            <person name="Clayton R.A."/>
            <person name="Gocayne J.D."/>
            <person name="Kerlavage A.R."/>
            <person name="Dougherty B.A."/>
            <person name="Tomb J.-F."/>
            <person name="Adams M.D."/>
            <person name="Reich C.I."/>
            <person name="Overbeek R."/>
            <person name="Kirkness E.F."/>
            <person name="Weinstock K.G."/>
            <person name="Merrick J.M."/>
            <person name="Glodek A."/>
            <person name="Scott J.L."/>
            <person name="Geoghagen N.S.M."/>
            <person name="Weidman J.F."/>
            <person name="Fuhrmann J.L."/>
            <person name="Nguyen D."/>
            <person name="Utterback T.R."/>
            <person name="Kelley J.M."/>
            <person name="Peterson J.D."/>
            <person name="Sadow P.W."/>
            <person name="Hanna M.C."/>
            <person name="Cotton M.D."/>
            <person name="Roberts K.M."/>
            <person name="Hurst M.A."/>
            <person name="Kaine B.P."/>
            <person name="Borodovsky M."/>
            <person name="Klenk H.-P."/>
            <person name="Fraser C.M."/>
            <person name="Smith H.O."/>
            <person name="Woese C.R."/>
            <person name="Venter J.C."/>
        </authorList>
    </citation>
    <scope>NUCLEOTIDE SEQUENCE [LARGE SCALE GENOMIC DNA]</scope>
    <source>
        <strain>ATCC 43067 / DSM 2661 / JAL-1 / JCM 10045 / NBRC 100440</strain>
    </source>
</reference>
<proteinExistence type="inferred from homology"/>
<keyword id="KW-0560">Oxidoreductase</keyword>
<keyword id="KW-1185">Reference proteome</keyword>